<protein>
    <recommendedName>
        <fullName evidence="1">Fe/S biogenesis protein NfuA</fullName>
    </recommendedName>
</protein>
<comment type="function">
    <text evidence="1">Involved in iron-sulfur cluster biogenesis. Binds a 4Fe-4S cluster, can transfer this cluster to apoproteins, and thereby intervenes in the maturation of Fe/S proteins. Could also act as a scaffold/chaperone for damaged Fe/S proteins.</text>
</comment>
<comment type="cofactor">
    <cofactor evidence="1">
        <name>[4Fe-4S] cluster</name>
        <dbReference type="ChEBI" id="CHEBI:49883"/>
    </cofactor>
    <text evidence="1">Binds 1 [4Fe-4S] cluster per subunit. The cluster is presumably bound at the interface of two monomers.</text>
</comment>
<comment type="subunit">
    <text evidence="1">Homodimer.</text>
</comment>
<comment type="similarity">
    <text evidence="1">Belongs to the NfuA family.</text>
</comment>
<evidence type="ECO:0000255" key="1">
    <source>
        <dbReference type="HAMAP-Rule" id="MF_01637"/>
    </source>
</evidence>
<gene>
    <name evidence="1" type="primary">nfuA</name>
    <name type="ordered locus">YpAngola_A3750</name>
</gene>
<organism>
    <name type="scientific">Yersinia pestis bv. Antiqua (strain Angola)</name>
    <dbReference type="NCBI Taxonomy" id="349746"/>
    <lineage>
        <taxon>Bacteria</taxon>
        <taxon>Pseudomonadati</taxon>
        <taxon>Pseudomonadota</taxon>
        <taxon>Gammaproteobacteria</taxon>
        <taxon>Enterobacterales</taxon>
        <taxon>Yersiniaceae</taxon>
        <taxon>Yersinia</taxon>
    </lineage>
</organism>
<dbReference type="EMBL" id="CP000901">
    <property type="protein sequence ID" value="ABX88167.1"/>
    <property type="molecule type" value="Genomic_DNA"/>
</dbReference>
<dbReference type="RefSeq" id="WP_002208924.1">
    <property type="nucleotide sequence ID" value="NZ_CP009935.1"/>
</dbReference>
<dbReference type="SMR" id="A9R4D2"/>
<dbReference type="GeneID" id="57974473"/>
<dbReference type="KEGG" id="ypg:YpAngola_A3750"/>
<dbReference type="PATRIC" id="fig|349746.12.peg.457"/>
<dbReference type="GO" id="GO:0051539">
    <property type="term" value="F:4 iron, 4 sulfur cluster binding"/>
    <property type="evidence" value="ECO:0007669"/>
    <property type="project" value="UniProtKB-UniRule"/>
</dbReference>
<dbReference type="GO" id="GO:0005506">
    <property type="term" value="F:iron ion binding"/>
    <property type="evidence" value="ECO:0007669"/>
    <property type="project" value="InterPro"/>
</dbReference>
<dbReference type="GO" id="GO:0016226">
    <property type="term" value="P:iron-sulfur cluster assembly"/>
    <property type="evidence" value="ECO:0007669"/>
    <property type="project" value="UniProtKB-UniRule"/>
</dbReference>
<dbReference type="GO" id="GO:0051604">
    <property type="term" value="P:protein maturation"/>
    <property type="evidence" value="ECO:0007669"/>
    <property type="project" value="UniProtKB-UniRule"/>
</dbReference>
<dbReference type="Gene3D" id="3.30.300.130">
    <property type="entry name" value="Fe-S cluster assembly (FSCA)"/>
    <property type="match status" value="1"/>
</dbReference>
<dbReference type="Gene3D" id="2.60.300.12">
    <property type="entry name" value="HesB-like domain"/>
    <property type="match status" value="1"/>
</dbReference>
<dbReference type="HAMAP" id="MF_01637">
    <property type="entry name" value="Fe_S_biogen_NfuA"/>
    <property type="match status" value="1"/>
</dbReference>
<dbReference type="InterPro" id="IPR017726">
    <property type="entry name" value="Fe/S_biogenesis_protein_NfuA"/>
</dbReference>
<dbReference type="InterPro" id="IPR000361">
    <property type="entry name" value="FeS_biogenesis"/>
</dbReference>
<dbReference type="InterPro" id="IPR034904">
    <property type="entry name" value="FSCA_dom_sf"/>
</dbReference>
<dbReference type="InterPro" id="IPR035903">
    <property type="entry name" value="HesB-like_dom_sf"/>
</dbReference>
<dbReference type="InterPro" id="IPR001075">
    <property type="entry name" value="NIF_FeS_clus_asmbl_NifU_C"/>
</dbReference>
<dbReference type="NCBIfam" id="NF008392">
    <property type="entry name" value="PRK11190.1"/>
    <property type="match status" value="1"/>
</dbReference>
<dbReference type="NCBIfam" id="TIGR03341">
    <property type="entry name" value="YhgI_GntY"/>
    <property type="match status" value="1"/>
</dbReference>
<dbReference type="PANTHER" id="PTHR11178:SF51">
    <property type="entry name" value="FE_S BIOGENESIS PROTEIN NFUA"/>
    <property type="match status" value="1"/>
</dbReference>
<dbReference type="PANTHER" id="PTHR11178">
    <property type="entry name" value="IRON-SULFUR CLUSTER SCAFFOLD PROTEIN NFU-RELATED"/>
    <property type="match status" value="1"/>
</dbReference>
<dbReference type="Pfam" id="PF01521">
    <property type="entry name" value="Fe-S_biosyn"/>
    <property type="match status" value="1"/>
</dbReference>
<dbReference type="Pfam" id="PF01106">
    <property type="entry name" value="NifU"/>
    <property type="match status" value="1"/>
</dbReference>
<dbReference type="SUPFAM" id="SSF117916">
    <property type="entry name" value="Fe-S cluster assembly (FSCA) domain-like"/>
    <property type="match status" value="1"/>
</dbReference>
<dbReference type="SUPFAM" id="SSF89360">
    <property type="entry name" value="HesB-like domain"/>
    <property type="match status" value="1"/>
</dbReference>
<name>NFUA_YERPG</name>
<keyword id="KW-0004">4Fe-4S</keyword>
<keyword id="KW-0408">Iron</keyword>
<keyword id="KW-0411">Iron-sulfur</keyword>
<keyword id="KW-0479">Metal-binding</keyword>
<accession>A9R4D2</accession>
<feature type="chain" id="PRO_1000186796" description="Fe/S biogenesis protein NfuA">
    <location>
        <begin position="1"/>
        <end position="191"/>
    </location>
</feature>
<feature type="binding site" evidence="1">
    <location>
        <position position="149"/>
    </location>
    <ligand>
        <name>[4Fe-4S] cluster</name>
        <dbReference type="ChEBI" id="CHEBI:49883"/>
    </ligand>
</feature>
<feature type="binding site" evidence="1">
    <location>
        <position position="152"/>
    </location>
    <ligand>
        <name>[4Fe-4S] cluster</name>
        <dbReference type="ChEBI" id="CHEBI:49883"/>
    </ligand>
</feature>
<proteinExistence type="inferred from homology"/>
<reference key="1">
    <citation type="journal article" date="2010" name="J. Bacteriol.">
        <title>Genome sequence of the deep-rooted Yersinia pestis strain Angola reveals new insights into the evolution and pangenome of the plague bacterium.</title>
        <authorList>
            <person name="Eppinger M."/>
            <person name="Worsham P.L."/>
            <person name="Nikolich M.P."/>
            <person name="Riley D.R."/>
            <person name="Sebastian Y."/>
            <person name="Mou S."/>
            <person name="Achtman M."/>
            <person name="Lindler L.E."/>
            <person name="Ravel J."/>
        </authorList>
    </citation>
    <scope>NUCLEOTIDE SEQUENCE [LARGE SCALE GENOMIC DNA]</scope>
    <source>
        <strain>Angola</strain>
    </source>
</reference>
<sequence length="191" mass="21004">MITITDAAQSHFAKLLANQEEGTQIRVFVINPGTPTAECGVSYCPPDAVEATDTELKFEQLSAYVDELSVPYLQDAEIDFVTDQLGSQLTLKAPNAKMRKVDDSAPLMERVEYVLQSQINPQLAGHGGRVTLMEITPEGLAILQFGGGCNGCSMVDVTLKEGIEKELLQKFPELKGVRDLTEHQRGEHSYY</sequence>